<sequence length="256" mass="29676">MRKQIVELFLIILAVLFIREYIAQAYTIPSASMEPTLLVGDFILVNKLVYSLSEPMRGDMIVFKYPKNPDIDFIKRIIARGGDTVEFFPYYDEKNNVLIYKVAVNGKLYELTYEGEKNYSYDCYQYREKLYREDGEVIQHSVCFRNTLLKVPGMVYNAISSDLCLKYNEDGFCVKFVVPEGYYFVMGDNRDNSQDSRFWGFVPRENIEGKAFVIYYSGKVPSLTPEEANPLTAVRQIIYALLNPRPSRIGKPLIDK</sequence>
<keyword id="KW-0378">Hydrolase</keyword>
<keyword id="KW-0645">Protease</keyword>
<keyword id="KW-1185">Reference proteome</keyword>
<proteinExistence type="inferred from homology"/>
<feature type="chain" id="PRO_0000109492" description="Signal peptidase I">
    <location>
        <begin position="1"/>
        <end position="256"/>
    </location>
</feature>
<feature type="active site" evidence="1">
    <location>
        <position position="32"/>
    </location>
</feature>
<feature type="active site" evidence="1">
    <location>
        <position position="75"/>
    </location>
</feature>
<gene>
    <name type="primary">lepB</name>
    <name type="ordered locus">aq_955</name>
</gene>
<dbReference type="EC" id="3.4.21.89"/>
<dbReference type="EMBL" id="AE000657">
    <property type="protein sequence ID" value="AAC07042.1"/>
    <property type="molecule type" value="Genomic_DNA"/>
</dbReference>
<dbReference type="PIR" id="E70382">
    <property type="entry name" value="E70382"/>
</dbReference>
<dbReference type="RefSeq" id="NP_213651.1">
    <property type="nucleotide sequence ID" value="NC_000918.1"/>
</dbReference>
<dbReference type="RefSeq" id="WP_010880589.1">
    <property type="nucleotide sequence ID" value="NC_000918.1"/>
</dbReference>
<dbReference type="SMR" id="O67088"/>
<dbReference type="FunCoup" id="O67088">
    <property type="interactions" value="273"/>
</dbReference>
<dbReference type="STRING" id="224324.aq_955"/>
<dbReference type="MEROPS" id="S26.025"/>
<dbReference type="EnsemblBacteria" id="AAC07042">
    <property type="protein sequence ID" value="AAC07042"/>
    <property type="gene ID" value="aq_955"/>
</dbReference>
<dbReference type="KEGG" id="aae:aq_955"/>
<dbReference type="PATRIC" id="fig|224324.8.peg.749"/>
<dbReference type="eggNOG" id="COG0681">
    <property type="taxonomic scope" value="Bacteria"/>
</dbReference>
<dbReference type="HOGENOM" id="CLU_028723_1_3_0"/>
<dbReference type="InParanoid" id="O67088"/>
<dbReference type="OrthoDB" id="9802919at2"/>
<dbReference type="Proteomes" id="UP000000798">
    <property type="component" value="Chromosome"/>
</dbReference>
<dbReference type="GO" id="GO:0016020">
    <property type="term" value="C:membrane"/>
    <property type="evidence" value="ECO:0007669"/>
    <property type="project" value="InterPro"/>
</dbReference>
<dbReference type="GO" id="GO:0004252">
    <property type="term" value="F:serine-type endopeptidase activity"/>
    <property type="evidence" value="ECO:0000318"/>
    <property type="project" value="GO_Central"/>
</dbReference>
<dbReference type="GO" id="GO:0006465">
    <property type="term" value="P:signal peptide processing"/>
    <property type="evidence" value="ECO:0000318"/>
    <property type="project" value="GO_Central"/>
</dbReference>
<dbReference type="CDD" id="cd06530">
    <property type="entry name" value="S26_SPase_I"/>
    <property type="match status" value="1"/>
</dbReference>
<dbReference type="Gene3D" id="2.10.109.10">
    <property type="entry name" value="Umud Fragment, subunit A"/>
    <property type="match status" value="1"/>
</dbReference>
<dbReference type="InterPro" id="IPR036286">
    <property type="entry name" value="LexA/Signal_pep-like_sf"/>
</dbReference>
<dbReference type="InterPro" id="IPR000223">
    <property type="entry name" value="Pept_S26A_signal_pept_1"/>
</dbReference>
<dbReference type="InterPro" id="IPR019758">
    <property type="entry name" value="Pept_S26A_signal_pept_1_CS"/>
</dbReference>
<dbReference type="InterPro" id="IPR019757">
    <property type="entry name" value="Pept_S26A_signal_pept_1_Lys-AS"/>
</dbReference>
<dbReference type="InterPro" id="IPR019756">
    <property type="entry name" value="Pept_S26A_signal_pept_1_Ser-AS"/>
</dbReference>
<dbReference type="InterPro" id="IPR019533">
    <property type="entry name" value="Peptidase_S26"/>
</dbReference>
<dbReference type="NCBIfam" id="TIGR02227">
    <property type="entry name" value="sigpep_I_bact"/>
    <property type="match status" value="1"/>
</dbReference>
<dbReference type="PANTHER" id="PTHR43390:SF1">
    <property type="entry name" value="CHLOROPLAST PROCESSING PEPTIDASE"/>
    <property type="match status" value="1"/>
</dbReference>
<dbReference type="PANTHER" id="PTHR43390">
    <property type="entry name" value="SIGNAL PEPTIDASE I"/>
    <property type="match status" value="1"/>
</dbReference>
<dbReference type="Pfam" id="PF10502">
    <property type="entry name" value="Peptidase_S26"/>
    <property type="match status" value="1"/>
</dbReference>
<dbReference type="PRINTS" id="PR00727">
    <property type="entry name" value="LEADERPTASE"/>
</dbReference>
<dbReference type="SUPFAM" id="SSF51306">
    <property type="entry name" value="LexA/Signal peptidase"/>
    <property type="match status" value="1"/>
</dbReference>
<dbReference type="PROSITE" id="PS00501">
    <property type="entry name" value="SPASE_I_1"/>
    <property type="match status" value="1"/>
</dbReference>
<dbReference type="PROSITE" id="PS00760">
    <property type="entry name" value="SPASE_I_2"/>
    <property type="match status" value="1"/>
</dbReference>
<dbReference type="PROSITE" id="PS00761">
    <property type="entry name" value="SPASE_I_3"/>
    <property type="match status" value="1"/>
</dbReference>
<reference key="1">
    <citation type="journal article" date="1998" name="Nature">
        <title>The complete genome of the hyperthermophilic bacterium Aquifex aeolicus.</title>
        <authorList>
            <person name="Deckert G."/>
            <person name="Warren P.V."/>
            <person name="Gaasterland T."/>
            <person name="Young W.G."/>
            <person name="Lenox A.L."/>
            <person name="Graham D.E."/>
            <person name="Overbeek R."/>
            <person name="Snead M.A."/>
            <person name="Keller M."/>
            <person name="Aujay M."/>
            <person name="Huber R."/>
            <person name="Feldman R.A."/>
            <person name="Short J.M."/>
            <person name="Olsen G.J."/>
            <person name="Swanson R.V."/>
        </authorList>
    </citation>
    <scope>NUCLEOTIDE SEQUENCE [LARGE SCALE GENOMIC DNA]</scope>
    <source>
        <strain>VF5</strain>
    </source>
</reference>
<comment type="catalytic activity">
    <reaction>
        <text>Cleavage of hydrophobic, N-terminal signal or leader sequences from secreted and periplasmic proteins.</text>
        <dbReference type="EC" id="3.4.21.89"/>
    </reaction>
</comment>
<comment type="similarity">
    <text evidence="2">Belongs to the peptidase S26 family.</text>
</comment>
<evidence type="ECO:0000250" key="1"/>
<evidence type="ECO:0000305" key="2"/>
<name>LEP_AQUAE</name>
<organism>
    <name type="scientific">Aquifex aeolicus (strain VF5)</name>
    <dbReference type="NCBI Taxonomy" id="224324"/>
    <lineage>
        <taxon>Bacteria</taxon>
        <taxon>Pseudomonadati</taxon>
        <taxon>Aquificota</taxon>
        <taxon>Aquificia</taxon>
        <taxon>Aquificales</taxon>
        <taxon>Aquificaceae</taxon>
        <taxon>Aquifex</taxon>
    </lineage>
</organism>
<accession>O67088</accession>
<protein>
    <recommendedName>
        <fullName>Signal peptidase I</fullName>
        <shortName>SPase I</shortName>
        <ecNumber>3.4.21.89</ecNumber>
    </recommendedName>
    <alternativeName>
        <fullName>Leader peptidase I</fullName>
    </alternativeName>
</protein>